<gene>
    <name type="primary">mobA</name>
    <name type="synonym">chlB</name>
    <name type="synonym">mob</name>
    <name type="synonym">narB</name>
    <name type="ordered locus">b3857</name>
    <name type="ordered locus">JW3829</name>
</gene>
<keyword id="KW-0002">3D-structure</keyword>
<keyword id="KW-0963">Cytoplasm</keyword>
<keyword id="KW-0903">Direct protein sequencing</keyword>
<keyword id="KW-0342">GTP-binding</keyword>
<keyword id="KW-0460">Magnesium</keyword>
<keyword id="KW-0464">Manganese</keyword>
<keyword id="KW-0479">Metal-binding</keyword>
<keyword id="KW-0501">Molybdenum cofactor biosynthesis</keyword>
<keyword id="KW-0547">Nucleotide-binding</keyword>
<keyword id="KW-1185">Reference proteome</keyword>
<keyword id="KW-0808">Transferase</keyword>
<sequence length="194" mass="21643">MNLMTTITGVVLAGGKARRMGGVDKGLLELNGKPLWQHVADALMTQLSHVVVNANRHQEIYQASGLKVIEDSLADYPGPLAGMLSVMQQEAGEWFLFCPCDTPYIPPDLAARLNHQRKDAPVVWVHDGERDHPTIALVNRAIEPLLLEYLQAGERRVMVFMRLAGGHAVDFSDHKDAFVNVNTPEELARWQEKR</sequence>
<organism>
    <name type="scientific">Escherichia coli (strain K12)</name>
    <dbReference type="NCBI Taxonomy" id="83333"/>
    <lineage>
        <taxon>Bacteria</taxon>
        <taxon>Pseudomonadati</taxon>
        <taxon>Pseudomonadota</taxon>
        <taxon>Gammaproteobacteria</taxon>
        <taxon>Enterobacterales</taxon>
        <taxon>Enterobacteriaceae</taxon>
        <taxon>Escherichia</taxon>
    </lineage>
</organism>
<evidence type="ECO:0000269" key="1">
    <source>
    </source>
</evidence>
<evidence type="ECO:0000269" key="2">
    <source>
    </source>
</evidence>
<evidence type="ECO:0000269" key="3">
    <source>
    </source>
</evidence>
<evidence type="ECO:0000269" key="4">
    <source>
    </source>
</evidence>
<evidence type="ECO:0000269" key="5">
    <source>
    </source>
</evidence>
<evidence type="ECO:0000269" key="6">
    <source>
    </source>
</evidence>
<evidence type="ECO:0000269" key="7">
    <source>
    </source>
</evidence>
<evidence type="ECO:0000269" key="8">
    <source>
    </source>
</evidence>
<evidence type="ECO:0000305" key="9"/>
<evidence type="ECO:0007829" key="10">
    <source>
        <dbReference type="PDB" id="1E5K"/>
    </source>
</evidence>
<evidence type="ECO:0007829" key="11">
    <source>
        <dbReference type="PDB" id="1FR9"/>
    </source>
</evidence>
<protein>
    <recommendedName>
        <fullName>Molybdenum cofactor guanylyltransferase</fullName>
        <shortName>MoCo guanylyltransferase</shortName>
        <ecNumber>2.7.7.77</ecNumber>
    </recommendedName>
    <alternativeName>
        <fullName>GTP:molybdopterin guanylyltransferase</fullName>
    </alternativeName>
    <alternativeName>
        <fullName>Mo-MPT guanylyltransferase</fullName>
    </alternativeName>
    <alternativeName>
        <fullName>Molybdopterin guanylyltransferase</fullName>
    </alternativeName>
    <alternativeName>
        <fullName>Molybdopterin-guanine dinucleotide biosynthesis protein A</fullName>
    </alternativeName>
    <alternativeName>
        <fullName>Molybdopterin-guanine dinucleotide synthase</fullName>
        <shortName>MGD synthase</shortName>
    </alternativeName>
    <alternativeName>
        <fullName>Protein FA</fullName>
    </alternativeName>
</protein>
<name>MOBA_ECOLI</name>
<comment type="function">
    <text evidence="2 5 6 8">Transfers a GMP moiety from GTP to Mo-molybdopterin (Mo-MPT) cofactor (Moco or molybdenum cofactor) to form Mo-molybdopterin guanine dinucleotide (Mo-MGD) cofactor. Is also involved in the biosynthesis of the bis-MGD form of the Moco cofactor (Mo-bisMGD) in which the metal is symmetrically ligated by the dithiolene groups of two MGD molecules. Is necessary and sufficient for the in vitro activation of the DMSOR molybdoenzyme that uses the Mo-bisMGD form of molybdenum cofactor, which implies formation and efficient insertion of the cofactor into the enzyme without the need of a chaperone. Is specific for GTP since other nucleotides such as ATP and GMP cannot be utilized.</text>
</comment>
<comment type="catalytic activity">
    <reaction evidence="2 6">
        <text>Mo-molybdopterin + GTP + H(+) = Mo-molybdopterin guanine dinucleotide + diphosphate</text>
        <dbReference type="Rhea" id="RHEA:34243"/>
        <dbReference type="ChEBI" id="CHEBI:15378"/>
        <dbReference type="ChEBI" id="CHEBI:33019"/>
        <dbReference type="ChEBI" id="CHEBI:37565"/>
        <dbReference type="ChEBI" id="CHEBI:71302"/>
        <dbReference type="ChEBI" id="CHEBI:71310"/>
        <dbReference type="EC" id="2.7.7.77"/>
    </reaction>
</comment>
<comment type="cofactor">
    <cofactor evidence="1 2">
        <name>Mg(2+)</name>
        <dbReference type="ChEBI" id="CHEBI:18420"/>
    </cofactor>
    <cofactor evidence="1 2">
        <name>Mn(2+)</name>
        <dbReference type="ChEBI" id="CHEBI:29035"/>
    </cofactor>
    <text evidence="1 2">Both divalent cations appear to be equally efficient in an vitro reconstitution assay.</text>
</comment>
<comment type="biophysicochemical properties">
    <kinetics>
        <KM evidence="6">6.5 uM for GTP</KM>
    </kinetics>
</comment>
<comment type="subunit">
    <text evidence="1 3 8">Monomer. An equilibrium exists between a monomeric and oligomeric form of the enzyme, which could be an octamer; whether this oligomeric arrangement is of functional relevance is unclear. Interacts with MoeA and MobB in vivo.</text>
</comment>
<comment type="interaction">
    <interactant intactId="EBI-1133881">
        <id>P32173</id>
    </interactant>
    <interactant intactId="EBI-554393">
        <id>P12281</id>
        <label>moeA</label>
    </interactant>
    <organismsDiffer>false</organismsDiffer>
    <experiments>3</experiments>
</comment>
<comment type="subcellular location">
    <subcellularLocation>
        <location>Cytoplasm</location>
    </subcellularLocation>
</comment>
<comment type="induction">
    <text evidence="7">Is expressed at very low levels under both aerobic and anaerobic growth conditions.</text>
</comment>
<comment type="domain">
    <text evidence="6">The N-terminal domain determines nucleotide recognition and specific binding, while the C-terminal domain determines the specific binding to the target protein. When the N-terminal domain of MobA is fused to the C-terminal domain of MocA, comparable kinetic constants as wild-type MobA are obtained with GTP, and the activity with CTP is completely lost. Consistent results are obtained when the N-terminal domain of MocA is fused to the C-terminal domain of MobA: the kinetic constants with CTP are comparable with the ones found for wild-type MocA, although no activity with GTP is detected.</text>
</comment>
<comment type="disruption phenotype">
    <text evidence="5">Cells lacking this gene are chlorate-resistant, fail to synthesize MGD and accumulate elevated quantities of MPT.</text>
</comment>
<comment type="similarity">
    <text evidence="9">Belongs to the MobA family.</text>
</comment>
<proteinExistence type="evidence at protein level"/>
<accession>P32173</accession>
<accession>Q2M8F5</accession>
<accession>Q9LBV0</accession>
<dbReference type="EC" id="2.7.7.77"/>
<dbReference type="EMBL" id="L19201">
    <property type="protein sequence ID" value="AAB02992.1"/>
    <property type="molecule type" value="Genomic_DNA"/>
</dbReference>
<dbReference type="EMBL" id="U00096">
    <property type="protein sequence ID" value="AAC76855.1"/>
    <property type="molecule type" value="Genomic_DNA"/>
</dbReference>
<dbReference type="EMBL" id="AP009048">
    <property type="protein sequence ID" value="BAE77451.1"/>
    <property type="molecule type" value="Genomic_DNA"/>
</dbReference>
<dbReference type="PIR" id="S40803">
    <property type="entry name" value="S40803"/>
</dbReference>
<dbReference type="RefSeq" id="NP_418294.1">
    <property type="nucleotide sequence ID" value="NC_000913.3"/>
</dbReference>
<dbReference type="RefSeq" id="WP_001052181.1">
    <property type="nucleotide sequence ID" value="NZ_STEB01000017.1"/>
</dbReference>
<dbReference type="PDB" id="1E5K">
    <property type="method" value="X-ray"/>
    <property type="resolution" value="1.35 A"/>
    <property type="chains" value="A=1-194"/>
</dbReference>
<dbReference type="PDB" id="1FR9">
    <property type="method" value="X-ray"/>
    <property type="resolution" value="1.65 A"/>
    <property type="chains" value="A=1-194"/>
</dbReference>
<dbReference type="PDB" id="1FRW">
    <property type="method" value="X-ray"/>
    <property type="resolution" value="1.75 A"/>
    <property type="chains" value="A=1-194"/>
</dbReference>
<dbReference type="PDB" id="1H4C">
    <property type="method" value="X-ray"/>
    <property type="resolution" value="1.65 A"/>
    <property type="chains" value="A=1-194"/>
</dbReference>
<dbReference type="PDB" id="1H4D">
    <property type="method" value="X-ray"/>
    <property type="resolution" value="1.74 A"/>
    <property type="chains" value="A=1-194"/>
</dbReference>
<dbReference type="PDB" id="1H4E">
    <property type="method" value="X-ray"/>
    <property type="resolution" value="1.65 A"/>
    <property type="chains" value="A=1-194"/>
</dbReference>
<dbReference type="PDB" id="1HJJ">
    <property type="method" value="X-ray"/>
    <property type="resolution" value="1.65 A"/>
    <property type="chains" value="A=1-194"/>
</dbReference>
<dbReference type="PDB" id="1HJL">
    <property type="method" value="X-ray"/>
    <property type="resolution" value="2.00 A"/>
    <property type="chains" value="A=1-194"/>
</dbReference>
<dbReference type="PDBsum" id="1E5K"/>
<dbReference type="PDBsum" id="1FR9"/>
<dbReference type="PDBsum" id="1FRW"/>
<dbReference type="PDBsum" id="1H4C"/>
<dbReference type="PDBsum" id="1H4D"/>
<dbReference type="PDBsum" id="1H4E"/>
<dbReference type="PDBsum" id="1HJJ"/>
<dbReference type="PDBsum" id="1HJL"/>
<dbReference type="SMR" id="P32173"/>
<dbReference type="BioGRID" id="4260705">
    <property type="interactions" value="12"/>
</dbReference>
<dbReference type="DIP" id="DIP-10233N"/>
<dbReference type="FunCoup" id="P32173">
    <property type="interactions" value="116"/>
</dbReference>
<dbReference type="IntAct" id="P32173">
    <property type="interactions" value="11"/>
</dbReference>
<dbReference type="STRING" id="511145.b3857"/>
<dbReference type="DrugBank" id="DB04137">
    <property type="generic name" value="Guanosine-5'-Triphosphate"/>
</dbReference>
<dbReference type="jPOST" id="P32173"/>
<dbReference type="PaxDb" id="511145-b3857"/>
<dbReference type="EnsemblBacteria" id="AAC76855">
    <property type="protein sequence ID" value="AAC76855"/>
    <property type="gene ID" value="b3857"/>
</dbReference>
<dbReference type="GeneID" id="948349"/>
<dbReference type="KEGG" id="ecj:JW3829"/>
<dbReference type="KEGG" id="eco:b3857"/>
<dbReference type="KEGG" id="ecoc:C3026_20850"/>
<dbReference type="PATRIC" id="fig|1411691.4.peg.2858"/>
<dbReference type="EchoBASE" id="EB1776"/>
<dbReference type="eggNOG" id="COG0746">
    <property type="taxonomic scope" value="Bacteria"/>
</dbReference>
<dbReference type="HOGENOM" id="CLU_055597_5_1_6"/>
<dbReference type="InParanoid" id="P32173"/>
<dbReference type="OMA" id="IDFWYAK"/>
<dbReference type="OrthoDB" id="9788394at2"/>
<dbReference type="PhylomeDB" id="P32173"/>
<dbReference type="BioCyc" id="EcoCyc:EG11829-MONOMER"/>
<dbReference type="BioCyc" id="MetaCyc:EG11829-MONOMER"/>
<dbReference type="BRENDA" id="2.7.7.77">
    <property type="organism ID" value="2026"/>
</dbReference>
<dbReference type="SABIO-RK" id="P32173"/>
<dbReference type="EvolutionaryTrace" id="P32173"/>
<dbReference type="PRO" id="PR:P32173"/>
<dbReference type="Proteomes" id="UP000000625">
    <property type="component" value="Chromosome"/>
</dbReference>
<dbReference type="GO" id="GO:0005737">
    <property type="term" value="C:cytoplasm"/>
    <property type="evidence" value="ECO:0007669"/>
    <property type="project" value="UniProtKB-SubCell"/>
</dbReference>
<dbReference type="GO" id="GO:0005525">
    <property type="term" value="F:GTP binding"/>
    <property type="evidence" value="ECO:0007669"/>
    <property type="project" value="UniProtKB-UniRule"/>
</dbReference>
<dbReference type="GO" id="GO:0000287">
    <property type="term" value="F:magnesium ion binding"/>
    <property type="evidence" value="ECO:0000314"/>
    <property type="project" value="EcoCyc"/>
</dbReference>
<dbReference type="GO" id="GO:0061603">
    <property type="term" value="F:molybdenum cofactor guanylyltransferase activity"/>
    <property type="evidence" value="ECO:0000314"/>
    <property type="project" value="EcoCyc"/>
</dbReference>
<dbReference type="GO" id="GO:0016779">
    <property type="term" value="F:nucleotidyltransferase activity"/>
    <property type="evidence" value="ECO:0000318"/>
    <property type="project" value="GO_Central"/>
</dbReference>
<dbReference type="GO" id="GO:1902758">
    <property type="term" value="P:bis(molybdopterin guanine dinucleotide)molybdenum biosynthetic process"/>
    <property type="evidence" value="ECO:0000315"/>
    <property type="project" value="EcoCyc"/>
</dbReference>
<dbReference type="CDD" id="cd02503">
    <property type="entry name" value="MobA"/>
    <property type="match status" value="1"/>
</dbReference>
<dbReference type="FunFam" id="3.90.550.10:FF:000118">
    <property type="entry name" value="Molybdenum cofactor guanylyltransferase"/>
    <property type="match status" value="1"/>
</dbReference>
<dbReference type="Gene3D" id="3.90.550.10">
    <property type="entry name" value="Spore Coat Polysaccharide Biosynthesis Protein SpsA, Chain A"/>
    <property type="match status" value="1"/>
</dbReference>
<dbReference type="HAMAP" id="MF_00316">
    <property type="entry name" value="MobA"/>
    <property type="match status" value="1"/>
</dbReference>
<dbReference type="InterPro" id="IPR025877">
    <property type="entry name" value="MobA-like_NTP_Trfase"/>
</dbReference>
<dbReference type="InterPro" id="IPR013482">
    <property type="entry name" value="Molybde_CF_guanTrfase"/>
</dbReference>
<dbReference type="InterPro" id="IPR029044">
    <property type="entry name" value="Nucleotide-diphossugar_trans"/>
</dbReference>
<dbReference type="NCBIfam" id="TIGR02665">
    <property type="entry name" value="molyb_mobA"/>
    <property type="match status" value="1"/>
</dbReference>
<dbReference type="PANTHER" id="PTHR19136">
    <property type="entry name" value="MOLYBDENUM COFACTOR GUANYLYLTRANSFERASE"/>
    <property type="match status" value="1"/>
</dbReference>
<dbReference type="PANTHER" id="PTHR19136:SF81">
    <property type="entry name" value="MOLYBDENUM COFACTOR GUANYLYLTRANSFERASE"/>
    <property type="match status" value="1"/>
</dbReference>
<dbReference type="Pfam" id="PF12804">
    <property type="entry name" value="NTP_transf_3"/>
    <property type="match status" value="1"/>
</dbReference>
<dbReference type="SUPFAM" id="SSF53448">
    <property type="entry name" value="Nucleotide-diphospho-sugar transferases"/>
    <property type="match status" value="1"/>
</dbReference>
<feature type="chain" id="PRO_0000134887" description="Molybdenum cofactor guanylyltransferase">
    <location>
        <begin position="1"/>
        <end position="194"/>
    </location>
</feature>
<feature type="binding site">
    <location>
        <begin position="12"/>
        <end position="14"/>
    </location>
    <ligand>
        <name>GTP</name>
        <dbReference type="ChEBI" id="CHEBI:37565"/>
    </ligand>
</feature>
<feature type="binding site">
    <location>
        <position position="25"/>
    </location>
    <ligand>
        <name>GTP</name>
        <dbReference type="ChEBI" id="CHEBI:37565"/>
    </ligand>
</feature>
<feature type="binding site">
    <location>
        <position position="53"/>
    </location>
    <ligand>
        <name>GTP</name>
        <dbReference type="ChEBI" id="CHEBI:37565"/>
    </ligand>
</feature>
<feature type="binding site">
    <location>
        <position position="71"/>
    </location>
    <ligand>
        <name>GTP</name>
        <dbReference type="ChEBI" id="CHEBI:37565"/>
    </ligand>
</feature>
<feature type="binding site">
    <location>
        <position position="101"/>
    </location>
    <ligand>
        <name>GTP</name>
        <dbReference type="ChEBI" id="CHEBI:37565"/>
    </ligand>
</feature>
<feature type="binding site">
    <location>
        <position position="101"/>
    </location>
    <ligand>
        <name>Mg(2+)</name>
        <dbReference type="ChEBI" id="CHEBI:18420"/>
    </ligand>
</feature>
<feature type="mutagenesis site" description="7.5-fold decrease in affinity for GTP and nearly no effect on catalytic activity. Displays a 3-fold decrease in activity with GTP and gains a low activity with CTP as substrate; when associated with 79-LLTS-82." evidence="6">
    <original>LAG</original>
    <variation>TAA</variation>
    <location>
        <begin position="12"/>
        <end position="14"/>
    </location>
</feature>
<feature type="mutagenesis site" description="Complete loss of catalytic activity. Still capable of binding MPT and MGD and interacting with both MoeA and MobB." evidence="4">
    <original>G</original>
    <variation>L</variation>
    <location>
        <position position="15"/>
    </location>
</feature>
<feature type="mutagenesis site" description="Slight reduction in catalytic activity." evidence="4">
    <original>R</original>
    <variation>A</variation>
    <location>
        <position position="19"/>
    </location>
</feature>
<feature type="mutagenesis site" description="Nearly no effect on catalytic activity." evidence="4">
    <original>G</original>
    <variation>L</variation>
    <location>
        <position position="22"/>
    </location>
</feature>
<feature type="mutagenesis site" description="Marked reduction in catalytic activity. Still capable of interacting with both MoeA and MobB." evidence="4">
    <original>K</original>
    <variation>A</variation>
    <location>
        <position position="25"/>
    </location>
</feature>
<feature type="mutagenesis site" description="Nearly no effect on catalytic activity." evidence="4">
    <original>G</original>
    <variation>L</variation>
    <location>
        <position position="78"/>
    </location>
</feature>
<feature type="mutagenesis site" description="11-fold decrease in affinity for GTP and nearly no effect on catalytic activity. Displays a 3-fold decrease in activity with GTP and gains a low activity with CTP as substrate; when associated with 12-TAA-14." evidence="6">
    <original>PLAG</original>
    <variation>LLTS</variation>
    <location>
        <begin position="79"/>
        <end position="82"/>
    </location>
</feature>
<feature type="mutagenesis site" description="Slight reduction in catalytic activity." evidence="4">
    <original>G</original>
    <variation>L</variation>
    <location>
        <position position="82"/>
    </location>
</feature>
<feature type="mutagenesis site" description="Complete loss of catalytic activity." evidence="4">
    <original>D</original>
    <variation>A</variation>
    <location>
        <position position="101"/>
    </location>
</feature>
<feature type="mutagenesis site" description="Marked reduction in catalytic activity. Still capable of interacting with both MoeA and MobB." evidence="4">
    <original>D</original>
    <variation>N</variation>
    <location>
        <position position="101"/>
    </location>
</feature>
<feature type="mutagenesis site" description="Nearly no effect on catalytic activity." evidence="4">
    <original>R</original>
    <variation>A</variation>
    <location>
        <position position="156"/>
    </location>
</feature>
<feature type="mutagenesis site" description="Nearly no effect on catalytic activity." evidence="4">
    <original>N</original>
    <variation>D</variation>
    <location>
        <position position="180"/>
    </location>
</feature>
<feature type="mutagenesis site" description="Nearly no effect on catalytic activity." evidence="4">
    <original>N</original>
    <variation>D</variation>
    <location>
        <position position="182"/>
    </location>
</feature>
<feature type="helix" evidence="11">
    <location>
        <begin position="3"/>
        <end position="5"/>
    </location>
</feature>
<feature type="strand" evidence="10">
    <location>
        <begin position="6"/>
        <end position="12"/>
    </location>
</feature>
<feature type="strand" evidence="10">
    <location>
        <begin position="18"/>
        <end position="20"/>
    </location>
</feature>
<feature type="helix" evidence="10">
    <location>
        <begin position="25"/>
        <end position="27"/>
    </location>
</feature>
<feature type="strand" evidence="10">
    <location>
        <begin position="28"/>
        <end position="30"/>
    </location>
</feature>
<feature type="helix" evidence="10">
    <location>
        <begin position="35"/>
        <end position="46"/>
    </location>
</feature>
<feature type="strand" evidence="10">
    <location>
        <begin position="50"/>
        <end position="53"/>
    </location>
</feature>
<feature type="strand" evidence="10">
    <location>
        <begin position="55"/>
        <end position="57"/>
    </location>
</feature>
<feature type="helix" evidence="10">
    <location>
        <begin position="58"/>
        <end position="62"/>
    </location>
</feature>
<feature type="strand" evidence="11">
    <location>
        <begin position="67"/>
        <end position="69"/>
    </location>
</feature>
<feature type="helix" evidence="10">
    <location>
        <begin position="79"/>
        <end position="89"/>
    </location>
</feature>
<feature type="strand" evidence="10">
    <location>
        <begin position="92"/>
        <end position="99"/>
    </location>
</feature>
<feature type="helix" evidence="10">
    <location>
        <begin position="109"/>
        <end position="115"/>
    </location>
</feature>
<feature type="turn" evidence="11">
    <location>
        <begin position="116"/>
        <end position="119"/>
    </location>
</feature>
<feature type="strand" evidence="10">
    <location>
        <begin position="121"/>
        <end position="126"/>
    </location>
</feature>
<feature type="strand" evidence="10">
    <location>
        <begin position="131"/>
        <end position="139"/>
    </location>
</feature>
<feature type="helix" evidence="10">
    <location>
        <begin position="142"/>
        <end position="151"/>
    </location>
</feature>
<feature type="helix" evidence="10">
    <location>
        <begin position="157"/>
        <end position="163"/>
    </location>
</feature>
<feature type="strand" evidence="10">
    <location>
        <begin position="167"/>
        <end position="170"/>
    </location>
</feature>
<feature type="turn" evidence="10">
    <location>
        <begin position="175"/>
        <end position="178"/>
    </location>
</feature>
<feature type="helix" evidence="10">
    <location>
        <begin position="184"/>
        <end position="188"/>
    </location>
</feature>
<reference key="1">
    <citation type="journal article" date="1993" name="Nucleic Acids Res.">
        <title>Analysis of the Escherichia coli genome. III. DNA sequence of the region from 87.2 to 89.2 minutes.</title>
        <authorList>
            <person name="Plunkett G. III"/>
            <person name="Burland V."/>
            <person name="Daniels D.L."/>
            <person name="Blattner F.R."/>
        </authorList>
    </citation>
    <scope>NUCLEOTIDE SEQUENCE [LARGE SCALE GENOMIC DNA]</scope>
    <source>
        <strain>K12 / MG1655 / ATCC 47076</strain>
    </source>
</reference>
<reference key="2">
    <citation type="journal article" date="1997" name="Science">
        <title>The complete genome sequence of Escherichia coli K-12.</title>
        <authorList>
            <person name="Blattner F.R."/>
            <person name="Plunkett G. III"/>
            <person name="Bloch C.A."/>
            <person name="Perna N.T."/>
            <person name="Burland V."/>
            <person name="Riley M."/>
            <person name="Collado-Vides J."/>
            <person name="Glasner J.D."/>
            <person name="Rode C.K."/>
            <person name="Mayhew G.F."/>
            <person name="Gregor J."/>
            <person name="Davis N.W."/>
            <person name="Kirkpatrick H.A."/>
            <person name="Goeden M.A."/>
            <person name="Rose D.J."/>
            <person name="Mau B."/>
            <person name="Shao Y."/>
        </authorList>
    </citation>
    <scope>NUCLEOTIDE SEQUENCE [LARGE SCALE GENOMIC DNA]</scope>
    <source>
        <strain>K12 / MG1655 / ATCC 47076</strain>
    </source>
</reference>
<reference key="3">
    <citation type="journal article" date="2006" name="Mol. Syst. Biol.">
        <title>Highly accurate genome sequences of Escherichia coli K-12 strains MG1655 and W3110.</title>
        <authorList>
            <person name="Hayashi K."/>
            <person name="Morooka N."/>
            <person name="Yamamoto Y."/>
            <person name="Fujita K."/>
            <person name="Isono K."/>
            <person name="Choi S."/>
            <person name="Ohtsubo E."/>
            <person name="Baba T."/>
            <person name="Wanner B.L."/>
            <person name="Mori H."/>
            <person name="Horiuchi T."/>
        </authorList>
    </citation>
    <scope>NUCLEOTIDE SEQUENCE [LARGE SCALE GENOMIC DNA]</scope>
    <source>
        <strain>K12 / W3110 / ATCC 27325 / DSM 5911</strain>
    </source>
</reference>
<reference key="4">
    <citation type="journal article" date="1995" name="Microbiology">
        <title>The mob locus of Escherichia coli K12 required for molybdenum cofactor biosynthesis is expressed at very low levels.</title>
        <authorList>
            <person name="Iobbi-Nivol C."/>
            <person name="Palmer T."/>
            <person name="Whitty P.W."/>
            <person name="McNairn E."/>
            <person name="Boxer D.H."/>
        </authorList>
    </citation>
    <scope>NUCLEOTIDE SEQUENCE [GENOMIC DNA]</scope>
    <scope>INDUCTION</scope>
    <source>
        <strain>K12</strain>
    </source>
</reference>
<reference key="5">
    <citation type="journal article" date="1994" name="Eur. J. Biochem.">
        <title>Isolation of protein FA, a product of the mob locus required for molybdenum cofactor biosynthesis in Escherichia coli.</title>
        <authorList>
            <person name="Palmer T."/>
            <person name="Vasishta A."/>
            <person name="Whitty P.W."/>
            <person name="Boxer D.H."/>
        </authorList>
    </citation>
    <scope>PROTEIN SEQUENCE OF 1-5</scope>
    <scope>FUNCTION IN MGD BIOSYNTHESIS</scope>
    <scope>SUBUNIT</scope>
</reference>
<reference key="6">
    <citation type="journal article" date="1991" name="J. Biol. Chem.">
        <title>Molybdenum cofactor biosynthesis in Escherichia coli. Requirement of the chlB gene product for the formation of molybdopterin guanine dinucleotide.</title>
        <authorList>
            <person name="Johnson J.L."/>
            <person name="Indermaur L.W."/>
            <person name="Rajagopalan K.V."/>
        </authorList>
    </citation>
    <scope>FUNCTION IN MGD BIOSYNTHESIS</scope>
    <scope>DISRUPTION PHENOTYPE</scope>
    <source>
        <strain>RK4353</strain>
    </source>
</reference>
<reference key="7">
    <citation type="journal article" date="2000" name="J. Biol. Chem.">
        <title>Mechanism of assembly of the bis(molybdopterin guanine dinucleotide)molybdenum cofactor in Rhodobacter sphaeroides dimethyl sulfoxide reductase.</title>
        <authorList>
            <person name="Temple C.A."/>
            <person name="Rajagopalan K.V."/>
        </authorList>
    </citation>
    <scope>FUNCTION IN BIS(MGD) AND MGD BIOSYNTHESIS</scope>
    <scope>CATALYTIC ACTIVITY</scope>
    <scope>SUBSTRATE SPECIFICITY</scope>
    <scope>COFACTOR</scope>
    <source>
        <strain>K12 / MC4100 / ATCC 35695 / DSM 6574</strain>
    </source>
</reference>
<reference key="8">
    <citation type="journal article" date="2002" name="J. Biol. Chem.">
        <title>In vivo interactions between gene products involved in the final stages of molybdenum cofactor biosynthesis in Escherichia coli.</title>
        <authorList>
            <person name="Magalon A."/>
            <person name="Frixon C."/>
            <person name="Pommier J."/>
            <person name="Giordano G."/>
            <person name="Blasco F."/>
        </authorList>
    </citation>
    <scope>INTERACTION WITH MOEA AND MOBB</scope>
    <source>
        <strain>K12 / MC4100 / ATCC 35695 / DSM 6574</strain>
    </source>
</reference>
<reference key="9">
    <citation type="journal article" date="2011" name="J. Biol. Chem.">
        <title>Molybdopterin dinucleotide biosynthesis in Escherichia coli: identification of amino acid residues of molybdopterin dinucleotide transferases that determine specificity for binding of guanine or cytosine nucleotides.</title>
        <authorList>
            <person name="Neumann M."/>
            <person name="Seduk F."/>
            <person name="Iobbi-Nivol C."/>
            <person name="Leimkuhler S."/>
        </authorList>
    </citation>
    <scope>FUNCTION</scope>
    <scope>CATALYTIC ACTIVITY</scope>
    <scope>KINETIC PARAMETERS</scope>
    <scope>DOMAIN</scope>
    <scope>MUTAGENESIS OF 12-LEU--GLY-14 AND 79-PRO--GLY-82</scope>
</reference>
<reference key="10">
    <citation type="journal article" date="2000" name="J. Biol. Chem.">
        <title>The crystal structure of the Escherichia coli MobA protein provides insight into molybdopterin guanine dinucleotide biosynthesis.</title>
        <authorList>
            <person name="Lake M.W."/>
            <person name="Temple C.A."/>
            <person name="Rajagopalan K.V."/>
            <person name="Schindelin H."/>
        </authorList>
    </citation>
    <scope>X-RAY CRYSTALLOGRAPHY (1.65 ANGSTROMS) OF APOENZYME AND IN COMPLEX WITH MN-GTP</scope>
    <scope>COFACTOR</scope>
    <scope>SUBUNIT</scope>
    <source>
        <strain>K12 / MC4100 / ATCC 35695 / DSM 6574</strain>
    </source>
</reference>
<reference key="11">
    <citation type="journal article" date="2000" name="Structure">
        <title>Crystal structure of the molybdenum cofactor biosynthesis protein MobA from Escherichia coli at near-atomic resolution.</title>
        <authorList>
            <person name="Stevenson C.E."/>
            <person name="Sargent F."/>
            <person name="Buchanan G."/>
            <person name="Palmer T."/>
            <person name="Lawson D.M."/>
        </authorList>
    </citation>
    <scope>X-RAY CRYSTALLOGRAPHY (1.35 ANGSTROMS)</scope>
    <source>
        <strain>K12</strain>
    </source>
</reference>
<reference key="12">
    <citation type="journal article" date="2003" name="J. Biol. Chem.">
        <title>Biochemical and structural analysis of the molybdenum cofactor biosynthesis protein MobA.</title>
        <authorList>
            <person name="Guse A."/>
            <person name="Stevenson C.E."/>
            <person name="Kuper J."/>
            <person name="Buchanan G."/>
            <person name="Schwarz G."/>
            <person name="Giordano G."/>
            <person name="Magalon A."/>
            <person name="Mendel R.R."/>
            <person name="Lawson D.M."/>
            <person name="Palmer T."/>
        </authorList>
    </citation>
    <scope>X-RAY CRYSTALLOGRAPHY (1.65 ANGSTROMS) OF MUTANTS ALA-19; LEU-22; ASN-101; ASP-180 AND ASP-182</scope>
    <scope>MUTAGENESIS OF GLY-15; ARG-19; GLY-22; LYS-25; GLY-78; GLY-82; ASP-101; ARG-156; ASN-180 AND ASN-182</scope>
    <source>
        <strain>K12</strain>
    </source>
</reference>